<protein>
    <recommendedName>
        <fullName evidence="1">tRNA(Met) cytidine acetate ligase</fullName>
        <ecNumber evidence="1">6.3.4.-</ecNumber>
    </recommendedName>
</protein>
<gene>
    <name evidence="1" type="primary">tmcAL</name>
    <name type="ordered locus">BT9727_3667</name>
</gene>
<organism>
    <name type="scientific">Bacillus thuringiensis subsp. konkukian (strain 97-27)</name>
    <dbReference type="NCBI Taxonomy" id="281309"/>
    <lineage>
        <taxon>Bacteria</taxon>
        <taxon>Bacillati</taxon>
        <taxon>Bacillota</taxon>
        <taxon>Bacilli</taxon>
        <taxon>Bacillales</taxon>
        <taxon>Bacillaceae</taxon>
        <taxon>Bacillus</taxon>
        <taxon>Bacillus cereus group</taxon>
    </lineage>
</organism>
<comment type="function">
    <text evidence="1">Catalyzes the formation of N(4)-acetylcytidine (ac(4)C) at the wobble position of elongator tRNA(Met), using acetate and ATP as substrates. First activates an acetate ion to form acetyladenylate (Ac-AMP) and then transfers the acetyl group to tRNA to form ac(4)C34.</text>
</comment>
<comment type="catalytic activity">
    <reaction evidence="1">
        <text>cytidine(34) in elongator tRNA(Met) + acetate + ATP = N(4)-acetylcytidine(34) in elongator tRNA(Met) + AMP + diphosphate</text>
        <dbReference type="Rhea" id="RHEA:58144"/>
        <dbReference type="Rhea" id="RHEA-COMP:10693"/>
        <dbReference type="Rhea" id="RHEA-COMP:10694"/>
        <dbReference type="ChEBI" id="CHEBI:30089"/>
        <dbReference type="ChEBI" id="CHEBI:30616"/>
        <dbReference type="ChEBI" id="CHEBI:33019"/>
        <dbReference type="ChEBI" id="CHEBI:74900"/>
        <dbReference type="ChEBI" id="CHEBI:82748"/>
        <dbReference type="ChEBI" id="CHEBI:456215"/>
    </reaction>
</comment>
<comment type="subcellular location">
    <subcellularLocation>
        <location evidence="1">Cytoplasm</location>
    </subcellularLocation>
</comment>
<comment type="similarity">
    <text evidence="1">Belongs to the TmcAL family.</text>
</comment>
<accession>Q6HEN9</accession>
<keyword id="KW-0067">ATP-binding</keyword>
<keyword id="KW-0963">Cytoplasm</keyword>
<keyword id="KW-0436">Ligase</keyword>
<keyword id="KW-0547">Nucleotide-binding</keyword>
<keyword id="KW-0694">RNA-binding</keyword>
<keyword id="KW-0819">tRNA processing</keyword>
<keyword id="KW-0820">tRNA-binding</keyword>
<reference key="1">
    <citation type="journal article" date="2006" name="J. Bacteriol.">
        <title>Pathogenomic sequence analysis of Bacillus cereus and Bacillus thuringiensis isolates closely related to Bacillus anthracis.</title>
        <authorList>
            <person name="Han C.S."/>
            <person name="Xie G."/>
            <person name="Challacombe J.F."/>
            <person name="Altherr M.R."/>
            <person name="Bhotika S.S."/>
            <person name="Bruce D."/>
            <person name="Campbell C.S."/>
            <person name="Campbell M.L."/>
            <person name="Chen J."/>
            <person name="Chertkov O."/>
            <person name="Cleland C."/>
            <person name="Dimitrijevic M."/>
            <person name="Doggett N.A."/>
            <person name="Fawcett J.J."/>
            <person name="Glavina T."/>
            <person name="Goodwin L.A."/>
            <person name="Hill K.K."/>
            <person name="Hitchcock P."/>
            <person name="Jackson P.J."/>
            <person name="Keim P."/>
            <person name="Kewalramani A.R."/>
            <person name="Longmire J."/>
            <person name="Lucas S."/>
            <person name="Malfatti S."/>
            <person name="McMurry K."/>
            <person name="Meincke L.J."/>
            <person name="Misra M."/>
            <person name="Moseman B.L."/>
            <person name="Mundt M."/>
            <person name="Munk A.C."/>
            <person name="Okinaka R.T."/>
            <person name="Parson-Quintana B."/>
            <person name="Reilly L.P."/>
            <person name="Richardson P."/>
            <person name="Robinson D.L."/>
            <person name="Rubin E."/>
            <person name="Saunders E."/>
            <person name="Tapia R."/>
            <person name="Tesmer J.G."/>
            <person name="Thayer N."/>
            <person name="Thompson L.S."/>
            <person name="Tice H."/>
            <person name="Ticknor L.O."/>
            <person name="Wills P.L."/>
            <person name="Brettin T.S."/>
            <person name="Gilna P."/>
        </authorList>
    </citation>
    <scope>NUCLEOTIDE SEQUENCE [LARGE SCALE GENOMIC DNA]</scope>
    <source>
        <strain>97-27</strain>
    </source>
</reference>
<sequence length="393" mass="45369">MQQTKKLTHSDITIAVMSGPFLQRGEPALVSKWYRTKMALACGVDLVVELPYAFSTQKAETFANGAISILNALHVSEICFGSEDGQIENFYNTISVQKNEEETFNRLVKQFMNAGNSYAKATSEAFLHILSSEKNIDMSQPNNILGFQYIKAILMQNSSMQAQTIKRFASHYHDETFNDQHIASATSIRKQLFSENSSFTEIESFIPKATASLLASYKQNYGTLHNWEQYFSFFKYKLMTMSPEDLRHIYEIEEGLEHRILSKIQTSSSFHSFMESLKTKRYTWTRLQRACTHILTNTTKEEIYCANIEQHAPYIRLLGMSQKGQTYLSKNKKKIELPILTHTKTFDHPTLHIERKANSVYFSIMKEPLRTQLLKRDATHHPIRYDETTAKFL</sequence>
<proteinExistence type="inferred from homology"/>
<feature type="chain" id="PRO_0000147157" description="tRNA(Met) cytidine acetate ligase">
    <location>
        <begin position="1"/>
        <end position="393"/>
    </location>
</feature>
<feature type="binding site" evidence="1">
    <location>
        <position position="81"/>
    </location>
    <ligand>
        <name>ATP</name>
        <dbReference type="ChEBI" id="CHEBI:30616"/>
    </ligand>
</feature>
<feature type="binding site" evidence="1">
    <location>
        <position position="142"/>
    </location>
    <ligand>
        <name>ATP</name>
        <dbReference type="ChEBI" id="CHEBI:30616"/>
    </ligand>
</feature>
<feature type="binding site" evidence="1">
    <location>
        <position position="167"/>
    </location>
    <ligand>
        <name>ATP</name>
        <dbReference type="ChEBI" id="CHEBI:30616"/>
    </ligand>
</feature>
<dbReference type="EC" id="6.3.4.-" evidence="1"/>
<dbReference type="EMBL" id="AE017355">
    <property type="protein sequence ID" value="AAT60654.1"/>
    <property type="molecule type" value="Genomic_DNA"/>
</dbReference>
<dbReference type="RefSeq" id="YP_037987.1">
    <property type="nucleotide sequence ID" value="NC_005957.1"/>
</dbReference>
<dbReference type="SMR" id="Q6HEN9"/>
<dbReference type="KEGG" id="btk:BT9727_3667"/>
<dbReference type="PATRIC" id="fig|281309.8.peg.3906"/>
<dbReference type="HOGENOM" id="CLU_038915_0_2_9"/>
<dbReference type="Proteomes" id="UP000001301">
    <property type="component" value="Chromosome"/>
</dbReference>
<dbReference type="GO" id="GO:0005737">
    <property type="term" value="C:cytoplasm"/>
    <property type="evidence" value="ECO:0007669"/>
    <property type="project" value="UniProtKB-SubCell"/>
</dbReference>
<dbReference type="GO" id="GO:0005524">
    <property type="term" value="F:ATP binding"/>
    <property type="evidence" value="ECO:0007669"/>
    <property type="project" value="UniProtKB-KW"/>
</dbReference>
<dbReference type="GO" id="GO:0016879">
    <property type="term" value="F:ligase activity, forming carbon-nitrogen bonds"/>
    <property type="evidence" value="ECO:0007669"/>
    <property type="project" value="UniProtKB-UniRule"/>
</dbReference>
<dbReference type="GO" id="GO:0000049">
    <property type="term" value="F:tRNA binding"/>
    <property type="evidence" value="ECO:0007669"/>
    <property type="project" value="UniProtKB-KW"/>
</dbReference>
<dbReference type="GO" id="GO:0006400">
    <property type="term" value="P:tRNA modification"/>
    <property type="evidence" value="ECO:0007669"/>
    <property type="project" value="UniProtKB-UniRule"/>
</dbReference>
<dbReference type="Gene3D" id="3.40.50.620">
    <property type="entry name" value="HUPs"/>
    <property type="match status" value="1"/>
</dbReference>
<dbReference type="HAMAP" id="MF_01539">
    <property type="entry name" value="TmcAL"/>
    <property type="match status" value="1"/>
</dbReference>
<dbReference type="InterPro" id="IPR014729">
    <property type="entry name" value="Rossmann-like_a/b/a_fold"/>
</dbReference>
<dbReference type="InterPro" id="IPR008513">
    <property type="entry name" value="tRNA(Met)_cyd_acetate_ligase"/>
</dbReference>
<dbReference type="NCBIfam" id="NF010191">
    <property type="entry name" value="PRK13670.1"/>
    <property type="match status" value="1"/>
</dbReference>
<dbReference type="PANTHER" id="PTHR37825">
    <property type="entry name" value="TRNA(MET) CYTIDINE ACETATE LIGASE"/>
    <property type="match status" value="1"/>
</dbReference>
<dbReference type="PANTHER" id="PTHR37825:SF1">
    <property type="entry name" value="TRNA(MET) CYTIDINE ACETATE LIGASE"/>
    <property type="match status" value="1"/>
</dbReference>
<dbReference type="Pfam" id="PF05636">
    <property type="entry name" value="HIGH_NTase1"/>
    <property type="match status" value="1"/>
</dbReference>
<dbReference type="SUPFAM" id="SSF52374">
    <property type="entry name" value="Nucleotidylyl transferase"/>
    <property type="match status" value="1"/>
</dbReference>
<name>TMCAL_BACHK</name>
<evidence type="ECO:0000255" key="1">
    <source>
        <dbReference type="HAMAP-Rule" id="MF_01539"/>
    </source>
</evidence>